<dbReference type="EMBL" id="AL939114">
    <property type="protein sequence ID" value="CAB90922.1"/>
    <property type="molecule type" value="Genomic_DNA"/>
</dbReference>
<dbReference type="RefSeq" id="NP_627233.1">
    <property type="nucleotide sequence ID" value="NC_003888.3"/>
</dbReference>
<dbReference type="RefSeq" id="WP_011028714.1">
    <property type="nucleotide sequence ID" value="NZ_VNID01000010.1"/>
</dbReference>
<dbReference type="STRING" id="100226.gene:17760623"/>
<dbReference type="PaxDb" id="100226-SCO3011"/>
<dbReference type="KEGG" id="sco:SCO3011"/>
<dbReference type="PATRIC" id="fig|100226.15.peg.3070"/>
<dbReference type="eggNOG" id="COG0823">
    <property type="taxonomic scope" value="Bacteria"/>
</dbReference>
<dbReference type="HOGENOM" id="CLU_032207_0_1_11"/>
<dbReference type="InParanoid" id="Q9KYX0"/>
<dbReference type="OrthoDB" id="3226781at2"/>
<dbReference type="Proteomes" id="UP000001973">
    <property type="component" value="Chromosome"/>
</dbReference>
<dbReference type="GO" id="GO:0005886">
    <property type="term" value="C:plasma membrane"/>
    <property type="evidence" value="ECO:0007669"/>
    <property type="project" value="UniProtKB-SubCell"/>
</dbReference>
<dbReference type="HAMAP" id="MF_01373">
    <property type="entry name" value="LpqB_lipoprot"/>
    <property type="match status" value="1"/>
</dbReference>
<dbReference type="InterPro" id="IPR019606">
    <property type="entry name" value="GerMN"/>
</dbReference>
<dbReference type="InterPro" id="IPR023959">
    <property type="entry name" value="Lipoprotein_LpqB"/>
</dbReference>
<dbReference type="InterPro" id="IPR018910">
    <property type="entry name" value="Lipoprotein_LpqB_C"/>
</dbReference>
<dbReference type="InterPro" id="IPR011044">
    <property type="entry name" value="Quino_amine_DH_bsu"/>
</dbReference>
<dbReference type="Pfam" id="PF10646">
    <property type="entry name" value="Germane"/>
    <property type="match status" value="1"/>
</dbReference>
<dbReference type="Pfam" id="PF10647">
    <property type="entry name" value="Gmad1"/>
    <property type="match status" value="1"/>
</dbReference>
<dbReference type="SMART" id="SM00909">
    <property type="entry name" value="Germane"/>
    <property type="match status" value="1"/>
</dbReference>
<dbReference type="SUPFAM" id="SSF50969">
    <property type="entry name" value="YVTN repeat-like/Quinoprotein amine dehydrogenase"/>
    <property type="match status" value="1"/>
</dbReference>
<dbReference type="PROSITE" id="PS51257">
    <property type="entry name" value="PROKAR_LIPOPROTEIN"/>
    <property type="match status" value="1"/>
</dbReference>
<reference key="1">
    <citation type="journal article" date="2002" name="Nature">
        <title>Complete genome sequence of the model actinomycete Streptomyces coelicolor A3(2).</title>
        <authorList>
            <person name="Bentley S.D."/>
            <person name="Chater K.F."/>
            <person name="Cerdeno-Tarraga A.-M."/>
            <person name="Challis G.L."/>
            <person name="Thomson N.R."/>
            <person name="James K.D."/>
            <person name="Harris D.E."/>
            <person name="Quail M.A."/>
            <person name="Kieser H."/>
            <person name="Harper D."/>
            <person name="Bateman A."/>
            <person name="Brown S."/>
            <person name="Chandra G."/>
            <person name="Chen C.W."/>
            <person name="Collins M."/>
            <person name="Cronin A."/>
            <person name="Fraser A."/>
            <person name="Goble A."/>
            <person name="Hidalgo J."/>
            <person name="Hornsby T."/>
            <person name="Howarth S."/>
            <person name="Huang C.-H."/>
            <person name="Kieser T."/>
            <person name="Larke L."/>
            <person name="Murphy L.D."/>
            <person name="Oliver K."/>
            <person name="O'Neil S."/>
            <person name="Rabbinowitsch E."/>
            <person name="Rajandream M.A."/>
            <person name="Rutherford K.M."/>
            <person name="Rutter S."/>
            <person name="Seeger K."/>
            <person name="Saunders D."/>
            <person name="Sharp S."/>
            <person name="Squares R."/>
            <person name="Squares S."/>
            <person name="Taylor K."/>
            <person name="Warren T."/>
            <person name="Wietzorrek A."/>
            <person name="Woodward J.R."/>
            <person name="Barrell B.G."/>
            <person name="Parkhill J."/>
            <person name="Hopwood D.A."/>
        </authorList>
    </citation>
    <scope>NUCLEOTIDE SEQUENCE [LARGE SCALE GENOMIC DNA]</scope>
    <source>
        <strain>ATCC BAA-471 / A3(2) / M145</strain>
    </source>
</reference>
<keyword id="KW-1003">Cell membrane</keyword>
<keyword id="KW-0449">Lipoprotein</keyword>
<keyword id="KW-0472">Membrane</keyword>
<keyword id="KW-0564">Palmitate</keyword>
<keyword id="KW-1185">Reference proteome</keyword>
<keyword id="KW-0732">Signal</keyword>
<protein>
    <recommendedName>
        <fullName evidence="1">Lipoprotein LpqB</fullName>
    </recommendedName>
</protein>
<name>LPQB_STRCO</name>
<gene>
    <name evidence="1" type="primary">lpqB</name>
    <name type="ordered locus">SCO3011</name>
    <name type="ORF">SCE33.13c</name>
</gene>
<organism>
    <name type="scientific">Streptomyces coelicolor (strain ATCC BAA-471 / A3(2) / M145)</name>
    <dbReference type="NCBI Taxonomy" id="100226"/>
    <lineage>
        <taxon>Bacteria</taxon>
        <taxon>Bacillati</taxon>
        <taxon>Actinomycetota</taxon>
        <taxon>Actinomycetes</taxon>
        <taxon>Kitasatosporales</taxon>
        <taxon>Streptomycetaceae</taxon>
        <taxon>Streptomyces</taxon>
        <taxon>Streptomyces albidoflavus group</taxon>
    </lineage>
</organism>
<comment type="subcellular location">
    <subcellularLocation>
        <location evidence="1">Cell membrane</location>
        <topology evidence="1">Lipid-anchor</topology>
    </subcellularLocation>
</comment>
<comment type="similarity">
    <text evidence="1">Belongs to the LpqB lipoprotein family.</text>
</comment>
<sequence>MGADRGRGGRRRPARVVAYAVGGVVLLAGCAAMPDSGDLRGVESTPRQDPQVRVFAMPPREDAPPADIVQGFLEALTSDDPHYETARKYLTGDAAKSWRPDESATVLAGGPGTESDHSGNREDANDYSVTLTGTRVATVDAQQSYAPADGVYRESVHLTRDGKSKQWRIDSLPPGVVMGKSDFQRNYMSVNRYYFASNTPVRAAAETGPVREPAAVADPVYVRRRVDPMTQVVRSLLSGPTSLLGPVVRSSFPTGTALAKNAGSLAPDDRSKLTVPLNDKAARAGADKCDEMAAQLLFTLQNLTPAVQEVELRSGGEQLCSLSEDRAETVATRGSAQRPDYLYFVDDQDRLVRIAAGSNGTRAEPVPGPLGEGHQALRSVAVSRDEHSAAGIGLDNKLLYVGSLVSGGSLGDPVLASQGKTESDRLTPPSWDAQGDLWIADRNPADPRLLLLKEGAGDPVEVRTPGLDGRVQAVRVAADGVRIALVVEKDGKRSLLIGRIERDGKAGDVPAVTVLELRSATPELEEVTAMSWAGDARLVVVGRERGGVQQIGYVQVDGSTPEASVPAALTGVKEIAATEDERLPLVAYSEDLIVRLPSGLQWQKVTEGTAPVYPG</sequence>
<accession>Q9KYX0</accession>
<proteinExistence type="inferred from homology"/>
<feature type="signal peptide" evidence="1">
    <location>
        <begin position="1"/>
        <end position="29"/>
    </location>
</feature>
<feature type="chain" id="PRO_0000286730" description="Lipoprotein LpqB">
    <location>
        <begin position="30"/>
        <end position="615"/>
    </location>
</feature>
<feature type="region of interest" description="Disordered" evidence="2">
    <location>
        <begin position="100"/>
        <end position="123"/>
    </location>
</feature>
<feature type="compositionally biased region" description="Basic and acidic residues" evidence="2">
    <location>
        <begin position="114"/>
        <end position="123"/>
    </location>
</feature>
<feature type="lipid moiety-binding region" description="N-palmitoyl cysteine" evidence="1">
    <location>
        <position position="30"/>
    </location>
</feature>
<feature type="lipid moiety-binding region" description="S-diacylglycerol cysteine" evidence="1">
    <location>
        <position position="30"/>
    </location>
</feature>
<evidence type="ECO:0000255" key="1">
    <source>
        <dbReference type="HAMAP-Rule" id="MF_01373"/>
    </source>
</evidence>
<evidence type="ECO:0000256" key="2">
    <source>
        <dbReference type="SAM" id="MobiDB-lite"/>
    </source>
</evidence>